<organism>
    <name type="scientific">Anaeromyxobacter dehalogenans (strain 2CP-C)</name>
    <dbReference type="NCBI Taxonomy" id="290397"/>
    <lineage>
        <taxon>Bacteria</taxon>
        <taxon>Pseudomonadati</taxon>
        <taxon>Myxococcota</taxon>
        <taxon>Myxococcia</taxon>
        <taxon>Myxococcales</taxon>
        <taxon>Cystobacterineae</taxon>
        <taxon>Anaeromyxobacteraceae</taxon>
        <taxon>Anaeromyxobacter</taxon>
    </lineage>
</organism>
<name>DNLI_ANADE</name>
<evidence type="ECO:0000255" key="1">
    <source>
        <dbReference type="HAMAP-Rule" id="MF_00407"/>
    </source>
</evidence>
<protein>
    <recommendedName>
        <fullName evidence="1">Probable DNA ligase</fullName>
        <ecNumber evidence="1">6.5.1.1</ecNumber>
    </recommendedName>
    <alternativeName>
        <fullName evidence="1">Polydeoxyribonucleotide synthase [ATP]</fullName>
    </alternativeName>
</protein>
<reference key="1">
    <citation type="submission" date="2006-01" db="EMBL/GenBank/DDBJ databases">
        <title>Complete sequence of Anaeromyxobacter dehalogenans 2CP-C.</title>
        <authorList>
            <person name="Copeland A."/>
            <person name="Lucas S."/>
            <person name="Lapidus A."/>
            <person name="Barry K."/>
            <person name="Detter J.C."/>
            <person name="Glavina T."/>
            <person name="Hammon N."/>
            <person name="Israni S."/>
            <person name="Pitluck S."/>
            <person name="Brettin T."/>
            <person name="Bruce D."/>
            <person name="Han C."/>
            <person name="Tapia R."/>
            <person name="Gilna P."/>
            <person name="Kiss H."/>
            <person name="Schmutz J."/>
            <person name="Larimer F."/>
            <person name="Land M."/>
            <person name="Kyrpides N."/>
            <person name="Anderson I."/>
            <person name="Sanford R.A."/>
            <person name="Ritalahti K.M."/>
            <person name="Thomas H.S."/>
            <person name="Kirby J.R."/>
            <person name="Zhulin I.B."/>
            <person name="Loeffler F.E."/>
            <person name="Richardson P."/>
        </authorList>
    </citation>
    <scope>NUCLEOTIDE SEQUENCE [LARGE SCALE GENOMIC DNA]</scope>
    <source>
        <strain>2CP-C</strain>
    </source>
</reference>
<comment type="function">
    <text evidence="1">DNA ligase that seals nicks in double-stranded DNA during DNA replication, DNA recombination and DNA repair.</text>
</comment>
<comment type="catalytic activity">
    <reaction evidence="1">
        <text>ATP + (deoxyribonucleotide)n-3'-hydroxyl + 5'-phospho-(deoxyribonucleotide)m = (deoxyribonucleotide)n+m + AMP + diphosphate.</text>
        <dbReference type="EC" id="6.5.1.1"/>
    </reaction>
</comment>
<comment type="cofactor">
    <cofactor evidence="1">
        <name>Mg(2+)</name>
        <dbReference type="ChEBI" id="CHEBI:18420"/>
    </cofactor>
</comment>
<comment type="similarity">
    <text evidence="1">Belongs to the ATP-dependent DNA ligase family.</text>
</comment>
<sequence>MLLAELAEVSRAVAATPARLEKIARLADALGRLAPDERAVGASWLAGDLPGGRVGIGAATLRAALEAAPPERSGPGLTVAEVDAALRRIAAVAGPGSGAARRRELDALLARAGNPERRFLAALVLGELRQGALEGVLADAVAKAAGLPAAEVRRAAMLAGALPPVAEAALSEGAAGLARFRLRVGEPVSPMLAQTAADVDEALRALGGEAALEWKLDGARIQAHRDGEAVRVFSRSLRDVTAAVPEVVALLRAAPEPRLVLDGEAIALRADGTPEPFQVTMRRFGRKLDVERLAPELPLTAFFFDALVAGGAELLARPERERWAALARAIPAERRVPRLVTRDPAEARAFLEDALARGQEGVVAKALDAPYEAGRRGAAWLKVKRAHTLDLVVLAAEWGSGRRRGWLSNLHLGARDPASGGFVMLGKTFKGMTDAMLAWQTDRLKALATGPLDAWQVPVRPELVVEVAFDGIQSSPRYPGGLALRFARVKRYREDKRPEDADTIETVRGLYGG</sequence>
<proteinExistence type="inferred from homology"/>
<gene>
    <name evidence="1" type="primary">lig</name>
    <name type="ordered locus">Adeh_4160</name>
</gene>
<dbReference type="EC" id="6.5.1.1" evidence="1"/>
<dbReference type="EMBL" id="CP000251">
    <property type="protein sequence ID" value="ABC83924.1"/>
    <property type="molecule type" value="Genomic_DNA"/>
</dbReference>
<dbReference type="RefSeq" id="WP_011423206.1">
    <property type="nucleotide sequence ID" value="NC_007760.1"/>
</dbReference>
<dbReference type="SMR" id="Q2IH69"/>
<dbReference type="STRING" id="290397.Adeh_4160"/>
<dbReference type="KEGG" id="ade:Adeh_4160"/>
<dbReference type="eggNOG" id="COG1793">
    <property type="taxonomic scope" value="Bacteria"/>
</dbReference>
<dbReference type="HOGENOM" id="CLU_005138_6_1_7"/>
<dbReference type="OrthoDB" id="9767858at2"/>
<dbReference type="Proteomes" id="UP000001935">
    <property type="component" value="Chromosome"/>
</dbReference>
<dbReference type="GO" id="GO:0005524">
    <property type="term" value="F:ATP binding"/>
    <property type="evidence" value="ECO:0007669"/>
    <property type="project" value="UniProtKB-UniRule"/>
</dbReference>
<dbReference type="GO" id="GO:0003677">
    <property type="term" value="F:DNA binding"/>
    <property type="evidence" value="ECO:0007669"/>
    <property type="project" value="InterPro"/>
</dbReference>
<dbReference type="GO" id="GO:0003910">
    <property type="term" value="F:DNA ligase (ATP) activity"/>
    <property type="evidence" value="ECO:0007669"/>
    <property type="project" value="UniProtKB-UniRule"/>
</dbReference>
<dbReference type="GO" id="GO:0046872">
    <property type="term" value="F:metal ion binding"/>
    <property type="evidence" value="ECO:0007669"/>
    <property type="project" value="UniProtKB-KW"/>
</dbReference>
<dbReference type="GO" id="GO:0051301">
    <property type="term" value="P:cell division"/>
    <property type="evidence" value="ECO:0007669"/>
    <property type="project" value="UniProtKB-KW"/>
</dbReference>
<dbReference type="GO" id="GO:0071897">
    <property type="term" value="P:DNA biosynthetic process"/>
    <property type="evidence" value="ECO:0007669"/>
    <property type="project" value="InterPro"/>
</dbReference>
<dbReference type="GO" id="GO:0006310">
    <property type="term" value="P:DNA recombination"/>
    <property type="evidence" value="ECO:0007669"/>
    <property type="project" value="UniProtKB-UniRule"/>
</dbReference>
<dbReference type="GO" id="GO:0006281">
    <property type="term" value="P:DNA repair"/>
    <property type="evidence" value="ECO:0007669"/>
    <property type="project" value="UniProtKB-UniRule"/>
</dbReference>
<dbReference type="GO" id="GO:0006260">
    <property type="term" value="P:DNA replication"/>
    <property type="evidence" value="ECO:0007669"/>
    <property type="project" value="UniProtKB-UniRule"/>
</dbReference>
<dbReference type="CDD" id="cd07901">
    <property type="entry name" value="Adenylation_DNA_ligase_Arch_LigB"/>
    <property type="match status" value="1"/>
</dbReference>
<dbReference type="CDD" id="cd07972">
    <property type="entry name" value="OBF_DNA_ligase_Arch_LigB"/>
    <property type="match status" value="1"/>
</dbReference>
<dbReference type="FunFam" id="2.40.50.140:FF:000163">
    <property type="entry name" value="Probable DNA ligase"/>
    <property type="match status" value="1"/>
</dbReference>
<dbReference type="Gene3D" id="1.10.3260.10">
    <property type="entry name" value="DNA ligase, ATP-dependent, N-terminal domain"/>
    <property type="match status" value="1"/>
</dbReference>
<dbReference type="Gene3D" id="3.30.470.30">
    <property type="entry name" value="DNA ligase/mRNA capping enzyme"/>
    <property type="match status" value="1"/>
</dbReference>
<dbReference type="Gene3D" id="2.40.50.140">
    <property type="entry name" value="Nucleic acid-binding proteins"/>
    <property type="match status" value="1"/>
</dbReference>
<dbReference type="HAMAP" id="MF_00407">
    <property type="entry name" value="DNA_ligase"/>
    <property type="match status" value="1"/>
</dbReference>
<dbReference type="InterPro" id="IPR050191">
    <property type="entry name" value="ATP-dep_DNA_ligase"/>
</dbReference>
<dbReference type="InterPro" id="IPR022865">
    <property type="entry name" value="DNA_ligae_ATP-dep_bac/arc"/>
</dbReference>
<dbReference type="InterPro" id="IPR000977">
    <property type="entry name" value="DNA_ligase_ATP-dep"/>
</dbReference>
<dbReference type="InterPro" id="IPR012309">
    <property type="entry name" value="DNA_ligase_ATP-dep_C"/>
</dbReference>
<dbReference type="InterPro" id="IPR012310">
    <property type="entry name" value="DNA_ligase_ATP-dep_cent"/>
</dbReference>
<dbReference type="InterPro" id="IPR016059">
    <property type="entry name" value="DNA_ligase_ATP-dep_CS"/>
</dbReference>
<dbReference type="InterPro" id="IPR012308">
    <property type="entry name" value="DNA_ligase_ATP-dep_N"/>
</dbReference>
<dbReference type="InterPro" id="IPR036599">
    <property type="entry name" value="DNA_ligase_N_sf"/>
</dbReference>
<dbReference type="InterPro" id="IPR012340">
    <property type="entry name" value="NA-bd_OB-fold"/>
</dbReference>
<dbReference type="NCBIfam" id="TIGR00574">
    <property type="entry name" value="dnl1"/>
    <property type="match status" value="1"/>
</dbReference>
<dbReference type="NCBIfam" id="NF002868">
    <property type="entry name" value="PRK03180.1"/>
    <property type="match status" value="1"/>
</dbReference>
<dbReference type="PANTHER" id="PTHR45674">
    <property type="entry name" value="DNA LIGASE 1/3 FAMILY MEMBER"/>
    <property type="match status" value="1"/>
</dbReference>
<dbReference type="PANTHER" id="PTHR45674:SF13">
    <property type="entry name" value="DNA LIGASE-RELATED"/>
    <property type="match status" value="1"/>
</dbReference>
<dbReference type="Pfam" id="PF04679">
    <property type="entry name" value="DNA_ligase_A_C"/>
    <property type="match status" value="1"/>
</dbReference>
<dbReference type="Pfam" id="PF01068">
    <property type="entry name" value="DNA_ligase_A_M"/>
    <property type="match status" value="1"/>
</dbReference>
<dbReference type="Pfam" id="PF04675">
    <property type="entry name" value="DNA_ligase_A_N"/>
    <property type="match status" value="1"/>
</dbReference>
<dbReference type="SUPFAM" id="SSF117018">
    <property type="entry name" value="ATP-dependent DNA ligase DNA-binding domain"/>
    <property type="match status" value="1"/>
</dbReference>
<dbReference type="SUPFAM" id="SSF56091">
    <property type="entry name" value="DNA ligase/mRNA capping enzyme, catalytic domain"/>
    <property type="match status" value="1"/>
</dbReference>
<dbReference type="SUPFAM" id="SSF50249">
    <property type="entry name" value="Nucleic acid-binding proteins"/>
    <property type="match status" value="1"/>
</dbReference>
<dbReference type="PROSITE" id="PS00697">
    <property type="entry name" value="DNA_LIGASE_A1"/>
    <property type="match status" value="1"/>
</dbReference>
<dbReference type="PROSITE" id="PS00333">
    <property type="entry name" value="DNA_LIGASE_A2"/>
    <property type="match status" value="1"/>
</dbReference>
<dbReference type="PROSITE" id="PS50160">
    <property type="entry name" value="DNA_LIGASE_A3"/>
    <property type="match status" value="1"/>
</dbReference>
<keyword id="KW-0067">ATP-binding</keyword>
<keyword id="KW-0131">Cell cycle</keyword>
<keyword id="KW-0132">Cell division</keyword>
<keyword id="KW-0227">DNA damage</keyword>
<keyword id="KW-0233">DNA recombination</keyword>
<keyword id="KW-0234">DNA repair</keyword>
<keyword id="KW-0235">DNA replication</keyword>
<keyword id="KW-0436">Ligase</keyword>
<keyword id="KW-0460">Magnesium</keyword>
<keyword id="KW-0479">Metal-binding</keyword>
<keyword id="KW-0547">Nucleotide-binding</keyword>
<keyword id="KW-1185">Reference proteome</keyword>
<feature type="chain" id="PRO_0000365216" description="Probable DNA ligase">
    <location>
        <begin position="1"/>
        <end position="513"/>
    </location>
</feature>
<feature type="active site" description="N6-AMP-lysine intermediate" evidence="1">
    <location>
        <position position="215"/>
    </location>
</feature>
<feature type="binding site" evidence="1">
    <location>
        <position position="213"/>
    </location>
    <ligand>
        <name>ATP</name>
        <dbReference type="ChEBI" id="CHEBI:30616"/>
    </ligand>
</feature>
<feature type="binding site" evidence="1">
    <location>
        <position position="220"/>
    </location>
    <ligand>
        <name>ATP</name>
        <dbReference type="ChEBI" id="CHEBI:30616"/>
    </ligand>
</feature>
<feature type="binding site" evidence="1">
    <location>
        <position position="235"/>
    </location>
    <ligand>
        <name>ATP</name>
        <dbReference type="ChEBI" id="CHEBI:30616"/>
    </ligand>
</feature>
<feature type="binding site" evidence="1">
    <location>
        <position position="264"/>
    </location>
    <ligand>
        <name>ATP</name>
        <dbReference type="ChEBI" id="CHEBI:30616"/>
    </ligand>
</feature>
<feature type="binding site" evidence="1">
    <location>
        <position position="304"/>
    </location>
    <ligand>
        <name>ATP</name>
        <dbReference type="ChEBI" id="CHEBI:30616"/>
    </ligand>
</feature>
<feature type="binding site" evidence="1">
    <location>
        <position position="376"/>
    </location>
    <ligand>
        <name>ATP</name>
        <dbReference type="ChEBI" id="CHEBI:30616"/>
    </ligand>
</feature>
<feature type="binding site" evidence="1">
    <location>
        <position position="382"/>
    </location>
    <ligand>
        <name>ATP</name>
        <dbReference type="ChEBI" id="CHEBI:30616"/>
    </ligand>
</feature>
<accession>Q2IH69</accession>